<name>DMA_VIBC3</name>
<protein>
    <recommendedName>
        <fullName>DNA adenine methylase</fullName>
        <ecNumber>2.1.1.72</ecNumber>
    </recommendedName>
    <alternativeName>
        <fullName>DNA adenine methyltransferase</fullName>
    </alternativeName>
    <alternativeName>
        <fullName>Deoxyadenosyl-methyltransferase</fullName>
    </alternativeName>
    <alternativeName>
        <fullName evidence="5">Orphan methyltransferase M.VchO395Dam/M.VchO395CDamP</fullName>
        <shortName evidence="5">M.VchO395Dam/M.VchO395CDamP</shortName>
    </alternativeName>
</protein>
<proteinExistence type="inferred from homology"/>
<organism>
    <name type="scientific">Vibrio cholerae serotype O1 (strain ATCC 39541 / Classical Ogawa 395 / O395)</name>
    <dbReference type="NCBI Taxonomy" id="345073"/>
    <lineage>
        <taxon>Bacteria</taxon>
        <taxon>Pseudomonadati</taxon>
        <taxon>Pseudomonadota</taxon>
        <taxon>Gammaproteobacteria</taxon>
        <taxon>Vibrionales</taxon>
        <taxon>Vibrionaceae</taxon>
        <taxon>Vibrio</taxon>
    </lineage>
</organism>
<dbReference type="EC" id="2.1.1.72"/>
<dbReference type="EMBL" id="AF274317">
    <property type="protein sequence ID" value="AAG23174.1"/>
    <property type="molecule type" value="Genomic_DNA"/>
</dbReference>
<dbReference type="EMBL" id="CP000627">
    <property type="protein sequence ID" value="ABQ21457.1"/>
    <property type="molecule type" value="Genomic_DNA"/>
</dbReference>
<dbReference type="EMBL" id="CP001235">
    <property type="protein sequence ID" value="ACP10724.1"/>
    <property type="molecule type" value="Genomic_DNA"/>
</dbReference>
<dbReference type="RefSeq" id="WP_000744680.1">
    <property type="nucleotide sequence ID" value="NZ_JAACZH010000007.1"/>
</dbReference>
<dbReference type="SMR" id="A5F520"/>
<dbReference type="REBASE" id="20804">
    <property type="entry name" value="M.VchO395CDamP"/>
</dbReference>
<dbReference type="REBASE" id="5786">
    <property type="entry name" value="M.VchO395Dam"/>
</dbReference>
<dbReference type="KEGG" id="vco:VC0395_A2203"/>
<dbReference type="KEGG" id="vcr:VC395_2739"/>
<dbReference type="PATRIC" id="fig|345073.21.peg.2639"/>
<dbReference type="eggNOG" id="COG0338">
    <property type="taxonomic scope" value="Bacteria"/>
</dbReference>
<dbReference type="HOGENOM" id="CLU_063430_0_1_6"/>
<dbReference type="OrthoDB" id="9805629at2"/>
<dbReference type="BRENDA" id="2.1.1.72">
    <property type="organism ID" value="6626"/>
</dbReference>
<dbReference type="Proteomes" id="UP000000249">
    <property type="component" value="Chromosome 2"/>
</dbReference>
<dbReference type="GO" id="GO:1904047">
    <property type="term" value="F:S-adenosyl-L-methionine binding"/>
    <property type="evidence" value="ECO:0007669"/>
    <property type="project" value="TreeGrafter"/>
</dbReference>
<dbReference type="GO" id="GO:0043565">
    <property type="term" value="F:sequence-specific DNA binding"/>
    <property type="evidence" value="ECO:0007669"/>
    <property type="project" value="TreeGrafter"/>
</dbReference>
<dbReference type="GO" id="GO:0009007">
    <property type="term" value="F:site-specific DNA-methyltransferase (adenine-specific) activity"/>
    <property type="evidence" value="ECO:0007669"/>
    <property type="project" value="UniProtKB-EC"/>
</dbReference>
<dbReference type="GO" id="GO:0006260">
    <property type="term" value="P:DNA replication"/>
    <property type="evidence" value="ECO:0007669"/>
    <property type="project" value="UniProtKB-KW"/>
</dbReference>
<dbReference type="GO" id="GO:0009307">
    <property type="term" value="P:DNA restriction-modification system"/>
    <property type="evidence" value="ECO:0007669"/>
    <property type="project" value="InterPro"/>
</dbReference>
<dbReference type="GO" id="GO:0032259">
    <property type="term" value="P:methylation"/>
    <property type="evidence" value="ECO:0007669"/>
    <property type="project" value="UniProtKB-KW"/>
</dbReference>
<dbReference type="GO" id="GO:0006298">
    <property type="term" value="P:mismatch repair"/>
    <property type="evidence" value="ECO:0007669"/>
    <property type="project" value="TreeGrafter"/>
</dbReference>
<dbReference type="FunFam" id="1.10.1020.10:FF:000001">
    <property type="entry name" value="Site-specific DNA-methyltransferase (adenine-specific)"/>
    <property type="match status" value="1"/>
</dbReference>
<dbReference type="Gene3D" id="1.10.1020.10">
    <property type="entry name" value="Adenine-specific Methyltransferase, Domain 2"/>
    <property type="match status" value="1"/>
</dbReference>
<dbReference type="Gene3D" id="3.40.50.150">
    <property type="entry name" value="Vaccinia Virus protein VP39"/>
    <property type="match status" value="1"/>
</dbReference>
<dbReference type="InterPro" id="IPR023095">
    <property type="entry name" value="Ade_MeTrfase_dom_2"/>
</dbReference>
<dbReference type="InterPro" id="IPR002052">
    <property type="entry name" value="DNA_methylase_N6_adenine_CS"/>
</dbReference>
<dbReference type="InterPro" id="IPR012263">
    <property type="entry name" value="M_m6A_EcoRV"/>
</dbReference>
<dbReference type="InterPro" id="IPR012327">
    <property type="entry name" value="MeTrfase_D12"/>
</dbReference>
<dbReference type="InterPro" id="IPR029063">
    <property type="entry name" value="SAM-dependent_MTases_sf"/>
</dbReference>
<dbReference type="NCBIfam" id="TIGR00571">
    <property type="entry name" value="dam"/>
    <property type="match status" value="1"/>
</dbReference>
<dbReference type="PANTHER" id="PTHR30481">
    <property type="entry name" value="DNA ADENINE METHYLASE"/>
    <property type="match status" value="1"/>
</dbReference>
<dbReference type="PANTHER" id="PTHR30481:SF3">
    <property type="entry name" value="DNA ADENINE METHYLASE"/>
    <property type="match status" value="1"/>
</dbReference>
<dbReference type="Pfam" id="PF02086">
    <property type="entry name" value="MethyltransfD12"/>
    <property type="match status" value="1"/>
</dbReference>
<dbReference type="PIRSF" id="PIRSF000398">
    <property type="entry name" value="M_m6A_EcoRV"/>
    <property type="match status" value="1"/>
</dbReference>
<dbReference type="PRINTS" id="PR00505">
    <property type="entry name" value="D12N6MTFRASE"/>
</dbReference>
<dbReference type="SUPFAM" id="SSF53335">
    <property type="entry name" value="S-adenosyl-L-methionine-dependent methyltransferases"/>
    <property type="match status" value="1"/>
</dbReference>
<dbReference type="PROSITE" id="PS00092">
    <property type="entry name" value="N6_MTASE"/>
    <property type="match status" value="1"/>
</dbReference>
<sequence>MKKQRAFLKWAGGKYSLVEDIQRHLPEARELVEPFVGAGSVFLNTDFERYLLADINPDLINFYNLLKTEPQAYIHEAKRWFVPENNRKEVYLDIRKQFNQSDDAMFRSLAFLYMNRFGFNGLCRYNKKGGFNVPFGSYKKPYFPEQELEFFAEKAQRATFICASYGETFARAQSDSVIYCDPPYAPLSTTANFTSYAGNGFTLDDQAALADIAEKTAKERGISVLISNHDTTHTRRLYRGAQLNVVKANRTISRNGAGRNKVDELLALFTPHLSSQA</sequence>
<keyword id="KW-0235">DNA replication</keyword>
<keyword id="KW-0238">DNA-binding</keyword>
<keyword id="KW-0489">Methyltransferase</keyword>
<keyword id="KW-0949">S-adenosyl-L-methionine</keyword>
<keyword id="KW-0808">Transferase</keyword>
<reference key="1">
    <citation type="journal article" date="2001" name="Infect. Immun.">
        <title>DNA adenine methylase is essential for viability and plays a role in the pathogenesis of Yersinia pseudotuberculosis and Vibrio cholerae.</title>
        <authorList>
            <person name="Julio S.M."/>
            <person name="Heithoff D.M."/>
            <person name="Provenzano D."/>
            <person name="Klose K.E."/>
            <person name="Sinsheimer R.L."/>
            <person name="Low D.A."/>
            <person name="Mahan M.J."/>
        </authorList>
    </citation>
    <scope>NUCLEOTIDE SEQUENCE [GENOMIC DNA]</scope>
    <scope>FUNCTION</scope>
    <scope>DISRUPTION PHENOTYPE</scope>
    <source>
        <strain>ATCC 39541 / Classical Ogawa 395 / O395</strain>
    </source>
</reference>
<reference key="2">
    <citation type="submission" date="2007-03" db="EMBL/GenBank/DDBJ databases">
        <authorList>
            <person name="Heidelberg J."/>
        </authorList>
    </citation>
    <scope>NUCLEOTIDE SEQUENCE [LARGE SCALE GENOMIC DNA]</scope>
    <source>
        <strain>ATCC 39541 / Classical Ogawa 395 / O395</strain>
    </source>
</reference>
<reference key="3">
    <citation type="journal article" date="2008" name="PLoS ONE">
        <title>A recalibrated molecular clock and independent origins for the cholera pandemic clones.</title>
        <authorList>
            <person name="Feng L."/>
            <person name="Reeves P.R."/>
            <person name="Lan R."/>
            <person name="Ren Y."/>
            <person name="Gao C."/>
            <person name="Zhou Z."/>
            <person name="Ren Y."/>
            <person name="Cheng J."/>
            <person name="Wang W."/>
            <person name="Wang J."/>
            <person name="Qian W."/>
            <person name="Li D."/>
            <person name="Wang L."/>
        </authorList>
    </citation>
    <scope>NUCLEOTIDE SEQUENCE [LARGE SCALE GENOMIC DNA]</scope>
    <source>
        <strain>ATCC 39541 / Classical Ogawa 395 / O395</strain>
    </source>
</reference>
<reference key="4">
    <citation type="journal article" date="2003" name="Nucleic Acids Res.">
        <title>A nomenclature for restriction enzymes, DNA methyltransferases, homing endonucleases and their genes.</title>
        <authorList>
            <person name="Roberts R.J."/>
            <person name="Belfort M."/>
            <person name="Bestor T."/>
            <person name="Bhagwat A.S."/>
            <person name="Bickle T.A."/>
            <person name="Bitinaite J."/>
            <person name="Blumenthal R.M."/>
            <person name="Degtyarev S.K."/>
            <person name="Dryden D.T."/>
            <person name="Dybvig K."/>
            <person name="Firman K."/>
            <person name="Gromova E.S."/>
            <person name="Gumport R.I."/>
            <person name="Halford S.E."/>
            <person name="Hattman S."/>
            <person name="Heitman J."/>
            <person name="Hornby D.P."/>
            <person name="Janulaitis A."/>
            <person name="Jeltsch A."/>
            <person name="Josephsen J."/>
            <person name="Kiss A."/>
            <person name="Klaenhammer T.R."/>
            <person name="Kobayashi I."/>
            <person name="Kong H."/>
            <person name="Krueger D.H."/>
            <person name="Lacks S."/>
            <person name="Marinus M.G."/>
            <person name="Miyahara M."/>
            <person name="Morgan R.D."/>
            <person name="Murray N.E."/>
            <person name="Nagaraja V."/>
            <person name="Piekarowicz A."/>
            <person name="Pingoud A."/>
            <person name="Raleigh E."/>
            <person name="Rao D.N."/>
            <person name="Reich N."/>
            <person name="Repin V.E."/>
            <person name="Selker E.U."/>
            <person name="Shaw P.C."/>
            <person name="Stein D.C."/>
            <person name="Stoddard B.L."/>
            <person name="Szybalski W."/>
            <person name="Trautner T.A."/>
            <person name="Van Etten J.L."/>
            <person name="Vitor J.M."/>
            <person name="Wilson G.G."/>
            <person name="Xu S.Y."/>
        </authorList>
    </citation>
    <scope>NOMENCLATURE</scope>
    <scope>SUBTYPE</scope>
</reference>
<evidence type="ECO:0000250" key="1"/>
<evidence type="ECO:0000250" key="2">
    <source>
        <dbReference type="UniProtKB" id="P0AEE8"/>
    </source>
</evidence>
<evidence type="ECO:0000269" key="3">
    <source>
    </source>
</evidence>
<evidence type="ECO:0000303" key="4">
    <source>
    </source>
</evidence>
<evidence type="ECO:0000303" key="5">
    <source>
    </source>
</evidence>
<evidence type="ECO:0000305" key="6"/>
<evidence type="ECO:0000305" key="7">
    <source>
    </source>
</evidence>
<comment type="function">
    <text evidence="2 5 7">An alpha subtype methylase, recognizes the double-stranded sequence 5'-GATC-3' and methylates A-2 (Probable) (PubMed:12654995). May be involved in methyl-directed DNA mismatch repair, initiation of chromosome replication and gene expression (By similarity).</text>
</comment>
<comment type="catalytic activity">
    <reaction>
        <text>a 2'-deoxyadenosine in DNA + S-adenosyl-L-methionine = an N(6)-methyl-2'-deoxyadenosine in DNA + S-adenosyl-L-homocysteine + H(+)</text>
        <dbReference type="Rhea" id="RHEA:15197"/>
        <dbReference type="Rhea" id="RHEA-COMP:12418"/>
        <dbReference type="Rhea" id="RHEA-COMP:12419"/>
        <dbReference type="ChEBI" id="CHEBI:15378"/>
        <dbReference type="ChEBI" id="CHEBI:57856"/>
        <dbReference type="ChEBI" id="CHEBI:59789"/>
        <dbReference type="ChEBI" id="CHEBI:90615"/>
        <dbReference type="ChEBI" id="CHEBI:90616"/>
        <dbReference type="EC" id="2.1.1.72"/>
    </reaction>
</comment>
<comment type="disruption phenotype">
    <text evidence="3">Essential, it cannot be deleted.</text>
</comment>
<comment type="similarity">
    <text evidence="6">Belongs to the N(4)/N(6)-methyltransferase family.</text>
</comment>
<gene>
    <name evidence="4" type="primary">dam</name>
    <name type="ordered locus">VC0395_A2203</name>
    <name type="ordered locus">VC395_2739</name>
</gene>
<accession>A5F520</accession>
<accession>C3LXM4</accession>
<accession>Q08318</accession>
<accession>Q9KNV4</accession>
<feature type="chain" id="PRO_0000324810" description="DNA adenine methylase">
    <location>
        <begin position="1"/>
        <end position="277"/>
    </location>
</feature>
<feature type="binding site" evidence="1">
    <location>
        <position position="10"/>
    </location>
    <ligand>
        <name>S-adenosyl-L-methionine</name>
        <dbReference type="ChEBI" id="CHEBI:59789"/>
    </ligand>
</feature>
<feature type="binding site" evidence="1">
    <location>
        <position position="14"/>
    </location>
    <ligand>
        <name>S-adenosyl-L-methionine</name>
        <dbReference type="ChEBI" id="CHEBI:59789"/>
    </ligand>
</feature>
<feature type="binding site" evidence="1">
    <location>
        <position position="54"/>
    </location>
    <ligand>
        <name>S-adenosyl-L-methionine</name>
        <dbReference type="ChEBI" id="CHEBI:59789"/>
    </ligand>
</feature>
<feature type="binding site" evidence="1">
    <location>
        <position position="181"/>
    </location>
    <ligand>
        <name>S-adenosyl-L-methionine</name>
        <dbReference type="ChEBI" id="CHEBI:59789"/>
    </ligand>
</feature>